<accession>B6V6L0</accession>
<comment type="subcellular location">
    <subcellularLocation>
        <location evidence="1">Secreted</location>
    </subcellularLocation>
</comment>
<comment type="tissue specificity">
    <text>Expressed by the venom duct.</text>
</comment>
<comment type="domain">
    <text>The presence of a 'disulfide through disulfide knot' structurally defines this protein as a knottin.</text>
</comment>
<comment type="domain">
    <text>The cysteine framework is VI/VII (C-C-CC-C-C).</text>
</comment>
<comment type="similarity">
    <text evidence="3">Belongs to the conotoxin M superfamily.</text>
</comment>
<name>M63_CONIM</name>
<proteinExistence type="evidence at transcript level"/>
<evidence type="ECO:0000250" key="1"/>
<evidence type="ECO:0000255" key="2"/>
<evidence type="ECO:0000305" key="3"/>
<sequence length="81" mass="9078">MSKLGVVLFTLLLLVPLVTPERDGGKWTMLAKNKKAMKRNLMDFITRTCDPYYCNDGKVCCPEYPTCGDSTGKLICVRVTD</sequence>
<protein>
    <recommendedName>
        <fullName>Conotoxin Im6.1</fullName>
    </recommendedName>
    <alternativeName>
        <fullName>Conotoxin 3</fullName>
    </alternativeName>
</protein>
<dbReference type="EMBL" id="FJ237364">
    <property type="protein sequence ID" value="ACI96055.1"/>
    <property type="molecule type" value="mRNA"/>
</dbReference>
<dbReference type="ConoServer" id="3400">
    <property type="toxin name" value="Im6.7 precursor"/>
</dbReference>
<dbReference type="GO" id="GO:0005576">
    <property type="term" value="C:extracellular region"/>
    <property type="evidence" value="ECO:0007669"/>
    <property type="project" value="UniProtKB-SubCell"/>
</dbReference>
<dbReference type="GO" id="GO:0008200">
    <property type="term" value="F:ion channel inhibitor activity"/>
    <property type="evidence" value="ECO:0007669"/>
    <property type="project" value="InterPro"/>
</dbReference>
<dbReference type="GO" id="GO:0090729">
    <property type="term" value="F:toxin activity"/>
    <property type="evidence" value="ECO:0007669"/>
    <property type="project" value="UniProtKB-KW"/>
</dbReference>
<dbReference type="InterPro" id="IPR004214">
    <property type="entry name" value="Conotoxin"/>
</dbReference>
<dbReference type="Pfam" id="PF02950">
    <property type="entry name" value="Conotoxin"/>
    <property type="match status" value="1"/>
</dbReference>
<keyword id="KW-1015">Disulfide bond</keyword>
<keyword id="KW-0960">Knottin</keyword>
<keyword id="KW-0964">Secreted</keyword>
<keyword id="KW-0732">Signal</keyword>
<keyword id="KW-0800">Toxin</keyword>
<feature type="signal peptide" evidence="2">
    <location>
        <begin position="1"/>
        <end position="20"/>
    </location>
</feature>
<feature type="propeptide" id="PRO_0000392726" evidence="3">
    <location>
        <begin position="21"/>
        <end position="47"/>
    </location>
</feature>
<feature type="peptide" id="PRO_0000392727" description="Conotoxin Im6.1">
    <location>
        <begin position="48"/>
        <end position="81"/>
    </location>
</feature>
<feature type="disulfide bond" evidence="1">
    <location>
        <begin position="49"/>
        <end position="61"/>
    </location>
</feature>
<feature type="disulfide bond" evidence="1">
    <location>
        <begin position="54"/>
        <end position="67"/>
    </location>
</feature>
<feature type="disulfide bond" evidence="1">
    <location>
        <begin position="60"/>
        <end position="76"/>
    </location>
</feature>
<reference key="1">
    <citation type="submission" date="2008-09" db="EMBL/GenBank/DDBJ databases">
        <authorList>
            <person name="Liu Z."/>
            <person name="Dai Q."/>
        </authorList>
    </citation>
    <scope>NUCLEOTIDE SEQUENCE [MRNA]</scope>
    <source>
        <tissue>Venom duct</tissue>
    </source>
</reference>
<organism>
    <name type="scientific">Conus imperialis</name>
    <name type="common">Imperial cone</name>
    <dbReference type="NCBI Taxonomy" id="35631"/>
    <lineage>
        <taxon>Eukaryota</taxon>
        <taxon>Metazoa</taxon>
        <taxon>Spiralia</taxon>
        <taxon>Lophotrochozoa</taxon>
        <taxon>Mollusca</taxon>
        <taxon>Gastropoda</taxon>
        <taxon>Caenogastropoda</taxon>
        <taxon>Neogastropoda</taxon>
        <taxon>Conoidea</taxon>
        <taxon>Conidae</taxon>
        <taxon>Conus</taxon>
        <taxon>Stephanoconus</taxon>
    </lineage>
</organism>